<feature type="chain" id="PRO_0000182604" description="Flagellin FljN">
    <location>
        <begin position="1"/>
        <end position="273"/>
    </location>
</feature>
<feature type="sequence conflict" description="In Ref. 1; AAB95381." evidence="1" ref="1">
    <original>S</original>
    <variation>W</variation>
    <location>
        <position position="109"/>
    </location>
</feature>
<feature type="sequence conflict" description="In Ref. 1; AAB95381." evidence="1" ref="1">
    <original>L</original>
    <variation>V</variation>
    <location>
        <position position="120"/>
    </location>
</feature>
<evidence type="ECO:0000305" key="1"/>
<reference key="1">
    <citation type="journal article" date="2000" name="J. Bacteriol.">
        <title>A family of six flagellin genes contributes to the Caulobacter crescentus flagellar filament.</title>
        <authorList>
            <person name="Ely B."/>
            <person name="Ely T.W."/>
            <person name="Crymes W.B. Jr."/>
            <person name="Minnich S.A."/>
        </authorList>
    </citation>
    <scope>NUCLEOTIDE SEQUENCE [GENOMIC DNA]</scope>
    <source>
        <strain>ATCC 19089 / CIP 103742 / CB 15</strain>
    </source>
</reference>
<reference key="2">
    <citation type="journal article" date="2001" name="Proc. Natl. Acad. Sci. U.S.A.">
        <title>Complete genome sequence of Caulobacter crescentus.</title>
        <authorList>
            <person name="Nierman W.C."/>
            <person name="Feldblyum T.V."/>
            <person name="Laub M.T."/>
            <person name="Paulsen I.T."/>
            <person name="Nelson K.E."/>
            <person name="Eisen J.A."/>
            <person name="Heidelberg J.F."/>
            <person name="Alley M.R.K."/>
            <person name="Ohta N."/>
            <person name="Maddock J.R."/>
            <person name="Potocka I."/>
            <person name="Nelson W.C."/>
            <person name="Newton A."/>
            <person name="Stephens C."/>
            <person name="Phadke N.D."/>
            <person name="Ely B."/>
            <person name="DeBoy R.T."/>
            <person name="Dodson R.J."/>
            <person name="Durkin A.S."/>
            <person name="Gwinn M.L."/>
            <person name="Haft D.H."/>
            <person name="Kolonay J.F."/>
            <person name="Smit J."/>
            <person name="Craven M.B."/>
            <person name="Khouri H.M."/>
            <person name="Shetty J."/>
            <person name="Berry K.J."/>
            <person name="Utterback T.R."/>
            <person name="Tran K."/>
            <person name="Wolf A.M."/>
            <person name="Vamathevan J.J."/>
            <person name="Ermolaeva M.D."/>
            <person name="White O."/>
            <person name="Salzberg S.L."/>
            <person name="Venter J.C."/>
            <person name="Shapiro L."/>
            <person name="Fraser C.M."/>
        </authorList>
    </citation>
    <scope>NUCLEOTIDE SEQUENCE [LARGE SCALE GENOMIC DNA]</scope>
    <source>
        <strain>ATCC 19089 / CIP 103742 / CB 15</strain>
    </source>
</reference>
<keyword id="KW-0002">3D-structure</keyword>
<keyword id="KW-0975">Bacterial flagellum</keyword>
<keyword id="KW-1185">Reference proteome</keyword>
<keyword id="KW-0964">Secreted</keyword>
<dbReference type="EMBL" id="AF040268">
    <property type="protein sequence ID" value="AAB95381.2"/>
    <property type="molecule type" value="Genomic_DNA"/>
</dbReference>
<dbReference type="EMBL" id="AE005673">
    <property type="protein sequence ID" value="AAK22778.1"/>
    <property type="molecule type" value="Genomic_DNA"/>
</dbReference>
<dbReference type="PIR" id="F87347">
    <property type="entry name" value="F87347"/>
</dbReference>
<dbReference type="RefSeq" id="NP_419610.1">
    <property type="nucleotide sequence ID" value="NC_002696.2"/>
</dbReference>
<dbReference type="RefSeq" id="WP_010918678.1">
    <property type="nucleotide sequence ID" value="NC_002696.2"/>
</dbReference>
<dbReference type="PDB" id="9CEF">
    <property type="method" value="EM"/>
    <property type="resolution" value="2.22 A"/>
    <property type="chains" value="A/B/C/D/E/F/G/H/I/J/K/L/M/N/O/P/Q/R/S/T/U/V/W/X/Y/Z/a/b/c/d=1-273"/>
</dbReference>
<dbReference type="PDBsum" id="9CEF"/>
<dbReference type="EMDB" id="EMD-45500"/>
<dbReference type="SMR" id="O52530"/>
<dbReference type="STRING" id="190650.CC_0793"/>
<dbReference type="EnsemblBacteria" id="AAK22778">
    <property type="protein sequence ID" value="AAK22778"/>
    <property type="gene ID" value="CC_0793"/>
</dbReference>
<dbReference type="KEGG" id="ccr:CC_0793"/>
<dbReference type="PATRIC" id="fig|190650.5.peg.805"/>
<dbReference type="eggNOG" id="COG1344">
    <property type="taxonomic scope" value="Bacteria"/>
</dbReference>
<dbReference type="HOGENOM" id="CLU_011142_1_0_5"/>
<dbReference type="BioCyc" id="CAULO:CC0793-MONOMER"/>
<dbReference type="Proteomes" id="UP000001816">
    <property type="component" value="Chromosome"/>
</dbReference>
<dbReference type="GO" id="GO:0009288">
    <property type="term" value="C:bacterial-type flagellum"/>
    <property type="evidence" value="ECO:0007669"/>
    <property type="project" value="UniProtKB-SubCell"/>
</dbReference>
<dbReference type="GO" id="GO:0005576">
    <property type="term" value="C:extracellular region"/>
    <property type="evidence" value="ECO:0007669"/>
    <property type="project" value="UniProtKB-SubCell"/>
</dbReference>
<dbReference type="GO" id="GO:0005198">
    <property type="term" value="F:structural molecule activity"/>
    <property type="evidence" value="ECO:0007669"/>
    <property type="project" value="InterPro"/>
</dbReference>
<dbReference type="Gene3D" id="1.20.1330.10">
    <property type="entry name" value="f41 fragment of flagellin, N-terminal domain"/>
    <property type="match status" value="1"/>
</dbReference>
<dbReference type="InterPro" id="IPR001492">
    <property type="entry name" value="Flagellin"/>
</dbReference>
<dbReference type="InterPro" id="IPR046358">
    <property type="entry name" value="Flagellin_C"/>
</dbReference>
<dbReference type="InterPro" id="IPR001029">
    <property type="entry name" value="Flagellin_N"/>
</dbReference>
<dbReference type="PANTHER" id="PTHR42792">
    <property type="entry name" value="FLAGELLIN"/>
    <property type="match status" value="1"/>
</dbReference>
<dbReference type="PANTHER" id="PTHR42792:SF2">
    <property type="entry name" value="FLAGELLIN"/>
    <property type="match status" value="1"/>
</dbReference>
<dbReference type="Pfam" id="PF00700">
    <property type="entry name" value="Flagellin_C"/>
    <property type="match status" value="1"/>
</dbReference>
<dbReference type="Pfam" id="PF00669">
    <property type="entry name" value="Flagellin_N"/>
    <property type="match status" value="1"/>
</dbReference>
<dbReference type="PRINTS" id="PR00207">
    <property type="entry name" value="FLAGELLIN"/>
</dbReference>
<dbReference type="SUPFAM" id="SSF64518">
    <property type="entry name" value="Phase 1 flagellin"/>
    <property type="match status" value="1"/>
</dbReference>
<comment type="function">
    <text>Flagellin is the subunit protein which polymerizes to form the filaments of bacterial flagella.</text>
</comment>
<comment type="subunit">
    <text>In C.crescentus, the flagellar filament is composed of multiple flagellins of 29 kDa; 27 kDa and 25 kDa.</text>
</comment>
<comment type="subcellular location">
    <subcellularLocation>
        <location>Secreted</location>
    </subcellularLocation>
    <subcellularLocation>
        <location>Bacterial flagellum</location>
    </subcellularLocation>
</comment>
<comment type="similarity">
    <text evidence="1">Belongs to the bacterial flagellin family.</text>
</comment>
<proteinExistence type="evidence at protein level"/>
<gene>
    <name type="primary">fljN</name>
    <name type="ordered locus">CC_0793</name>
</gene>
<accession>O52530</accession>
<protein>
    <recommendedName>
        <fullName>Flagellin FljN</fullName>
    </recommendedName>
</protein>
<organism>
    <name type="scientific">Caulobacter vibrioides (strain ATCC 19089 / CIP 103742 / CB 15)</name>
    <name type="common">Caulobacter crescentus</name>
    <dbReference type="NCBI Taxonomy" id="190650"/>
    <lineage>
        <taxon>Bacteria</taxon>
        <taxon>Pseudomonadati</taxon>
        <taxon>Pseudomonadota</taxon>
        <taxon>Alphaproteobacteria</taxon>
        <taxon>Caulobacterales</taxon>
        <taxon>Caulobacteraceae</taxon>
        <taxon>Caulobacter</taxon>
    </lineage>
</organism>
<name>FLJN_CAUVC</name>
<sequence length="273" mass="27925">MALNSINTNSGALIALQNLNSTNAELTQVQQRINTGKKIGSAKDNGAIWATAKNQSATANSMNAVKDSLQRGQSTIDVALAAGDTITDLLGKMKEKALAASDTSLNTASFNALKSDFDSLRDQITKAASNAKFNGVSIANGSTAKLTFLANSDGSGFTVTAKTLTLTGLGLTASSTFTTAAAAKTMIGTIDTALQTATNKLASLGTSSTGLDTHLTFVGKLQDSLDAGVGNLVDADLAKESAKLQSLQTKQQLGVQALSIANSSSSAILSLFR</sequence>